<name>DCUP_PARMW</name>
<organism>
    <name type="scientific">Parasynechococcus marenigrum (strain WH8102)</name>
    <dbReference type="NCBI Taxonomy" id="84588"/>
    <lineage>
        <taxon>Bacteria</taxon>
        <taxon>Bacillati</taxon>
        <taxon>Cyanobacteriota</taxon>
        <taxon>Cyanophyceae</taxon>
        <taxon>Synechococcales</taxon>
        <taxon>Prochlorococcaceae</taxon>
        <taxon>Parasynechococcus</taxon>
        <taxon>Parasynechococcus marenigrum</taxon>
    </lineage>
</organism>
<feature type="chain" id="PRO_0000187651" description="Uroporphyrinogen decarboxylase">
    <location>
        <begin position="1"/>
        <end position="352"/>
    </location>
</feature>
<feature type="binding site" evidence="1">
    <location>
        <begin position="26"/>
        <end position="30"/>
    </location>
    <ligand>
        <name>substrate</name>
    </ligand>
</feature>
<feature type="binding site" evidence="1">
    <location>
        <position position="45"/>
    </location>
    <ligand>
        <name>substrate</name>
    </ligand>
</feature>
<feature type="binding site" evidence="1">
    <location>
        <position position="76"/>
    </location>
    <ligand>
        <name>substrate</name>
    </ligand>
</feature>
<feature type="binding site" evidence="1">
    <location>
        <position position="153"/>
    </location>
    <ligand>
        <name>substrate</name>
    </ligand>
</feature>
<feature type="binding site" evidence="1">
    <location>
        <position position="208"/>
    </location>
    <ligand>
        <name>substrate</name>
    </ligand>
</feature>
<feature type="binding site" evidence="1">
    <location>
        <position position="323"/>
    </location>
    <ligand>
        <name>substrate</name>
    </ligand>
</feature>
<feature type="site" description="Transition state stabilizer" evidence="1">
    <location>
        <position position="76"/>
    </location>
</feature>
<protein>
    <recommendedName>
        <fullName evidence="1">Uroporphyrinogen decarboxylase</fullName>
        <shortName evidence="1">UPD</shortName>
        <shortName evidence="1">URO-D</shortName>
        <ecNumber evidence="1">4.1.1.37</ecNumber>
    </recommendedName>
</protein>
<comment type="function">
    <text evidence="1">Catalyzes the decarboxylation of four acetate groups of uroporphyrinogen-III to yield coproporphyrinogen-III.</text>
</comment>
<comment type="catalytic activity">
    <reaction evidence="1">
        <text>uroporphyrinogen III + 4 H(+) = coproporphyrinogen III + 4 CO2</text>
        <dbReference type="Rhea" id="RHEA:19865"/>
        <dbReference type="ChEBI" id="CHEBI:15378"/>
        <dbReference type="ChEBI" id="CHEBI:16526"/>
        <dbReference type="ChEBI" id="CHEBI:57308"/>
        <dbReference type="ChEBI" id="CHEBI:57309"/>
        <dbReference type="EC" id="4.1.1.37"/>
    </reaction>
</comment>
<comment type="pathway">
    <text evidence="1">Porphyrin-containing compound metabolism; protoporphyrin-IX biosynthesis; coproporphyrinogen-III from 5-aminolevulinate: step 4/4.</text>
</comment>
<comment type="subunit">
    <text evidence="1">Homodimer.</text>
</comment>
<comment type="subcellular location">
    <subcellularLocation>
        <location evidence="1">Cytoplasm</location>
    </subcellularLocation>
</comment>
<comment type="similarity">
    <text evidence="1">Belongs to the uroporphyrinogen decarboxylase family.</text>
</comment>
<gene>
    <name evidence="1" type="primary">hemE</name>
    <name type="ordered locus">SYNW1495</name>
</gene>
<reference key="1">
    <citation type="journal article" date="2003" name="Nature">
        <title>The genome of a motile marine Synechococcus.</title>
        <authorList>
            <person name="Palenik B."/>
            <person name="Brahamsha B."/>
            <person name="Larimer F.W."/>
            <person name="Land M.L."/>
            <person name="Hauser L."/>
            <person name="Chain P."/>
            <person name="Lamerdin J.E."/>
            <person name="Regala W."/>
            <person name="Allen E.E."/>
            <person name="McCarren J."/>
            <person name="Paulsen I.T."/>
            <person name="Dufresne A."/>
            <person name="Partensky F."/>
            <person name="Webb E.A."/>
            <person name="Waterbury J."/>
        </authorList>
    </citation>
    <scope>NUCLEOTIDE SEQUENCE [LARGE SCALE GENOMIC DNA]</scope>
    <source>
        <strain>WH8102</strain>
    </source>
</reference>
<dbReference type="EC" id="4.1.1.37" evidence="1"/>
<dbReference type="EMBL" id="BX569693">
    <property type="protein sequence ID" value="CAE08010.1"/>
    <property type="molecule type" value="Genomic_DNA"/>
</dbReference>
<dbReference type="RefSeq" id="WP_011128359.1">
    <property type="nucleotide sequence ID" value="NC_005070.1"/>
</dbReference>
<dbReference type="SMR" id="Q7U645"/>
<dbReference type="STRING" id="84588.SYNW1495"/>
<dbReference type="KEGG" id="syw:SYNW1495"/>
<dbReference type="eggNOG" id="COG0407">
    <property type="taxonomic scope" value="Bacteria"/>
</dbReference>
<dbReference type="HOGENOM" id="CLU_040933_0_2_3"/>
<dbReference type="UniPathway" id="UPA00251">
    <property type="reaction ID" value="UER00321"/>
</dbReference>
<dbReference type="Proteomes" id="UP000001422">
    <property type="component" value="Chromosome"/>
</dbReference>
<dbReference type="GO" id="GO:0005737">
    <property type="term" value="C:cytoplasm"/>
    <property type="evidence" value="ECO:0007669"/>
    <property type="project" value="UniProtKB-SubCell"/>
</dbReference>
<dbReference type="GO" id="GO:0004853">
    <property type="term" value="F:uroporphyrinogen decarboxylase activity"/>
    <property type="evidence" value="ECO:0007669"/>
    <property type="project" value="UniProtKB-UniRule"/>
</dbReference>
<dbReference type="GO" id="GO:0006782">
    <property type="term" value="P:protoporphyrinogen IX biosynthetic process"/>
    <property type="evidence" value="ECO:0007669"/>
    <property type="project" value="UniProtKB-UniRule"/>
</dbReference>
<dbReference type="CDD" id="cd00717">
    <property type="entry name" value="URO-D"/>
    <property type="match status" value="1"/>
</dbReference>
<dbReference type="FunFam" id="3.20.20.210:FF:000006">
    <property type="entry name" value="Uroporphyrinogen decarboxylase"/>
    <property type="match status" value="1"/>
</dbReference>
<dbReference type="Gene3D" id="3.20.20.210">
    <property type="match status" value="1"/>
</dbReference>
<dbReference type="HAMAP" id="MF_00218">
    <property type="entry name" value="URO_D"/>
    <property type="match status" value="1"/>
</dbReference>
<dbReference type="InterPro" id="IPR038071">
    <property type="entry name" value="UROD/MetE-like_sf"/>
</dbReference>
<dbReference type="InterPro" id="IPR006361">
    <property type="entry name" value="Uroporphyrinogen_deCO2ase_HemE"/>
</dbReference>
<dbReference type="InterPro" id="IPR000257">
    <property type="entry name" value="Uroporphyrinogen_deCOase"/>
</dbReference>
<dbReference type="NCBIfam" id="TIGR01464">
    <property type="entry name" value="hemE"/>
    <property type="match status" value="1"/>
</dbReference>
<dbReference type="PANTHER" id="PTHR21091">
    <property type="entry name" value="METHYLTETRAHYDROFOLATE:HOMOCYSTEINE METHYLTRANSFERASE RELATED"/>
    <property type="match status" value="1"/>
</dbReference>
<dbReference type="PANTHER" id="PTHR21091:SF169">
    <property type="entry name" value="UROPORPHYRINOGEN DECARBOXYLASE"/>
    <property type="match status" value="1"/>
</dbReference>
<dbReference type="Pfam" id="PF01208">
    <property type="entry name" value="URO-D"/>
    <property type="match status" value="1"/>
</dbReference>
<dbReference type="SUPFAM" id="SSF51726">
    <property type="entry name" value="UROD/MetE-like"/>
    <property type="match status" value="1"/>
</dbReference>
<dbReference type="PROSITE" id="PS00906">
    <property type="entry name" value="UROD_1"/>
    <property type="match status" value="1"/>
</dbReference>
<dbReference type="PROSITE" id="PS00907">
    <property type="entry name" value="UROD_2"/>
    <property type="match status" value="1"/>
</dbReference>
<proteinExistence type="inferred from homology"/>
<accession>Q7U645</accession>
<sequence length="352" mass="38862">MSDTLPLLLRAARGEAVERPPVWMMRQAGRYMKIYRDLRDKYPSFRERSENPDLSYEISMQPFHAFKPDGVILFSDILTPLPGMGIDFDIIESKGPQIGDPIRSMDQVNALRPLNPSESMPFVGEVLGRLRESVGNEAAVLGFVGAPWTLAAYVVEGKSSKNYAVIKAMAFREPELLHKLLDHFAESIANYLRFQIDSGAQVVQMFDSWAGQLSPADYDTFAAPYQKKVVDLVKQTHPDTPFILYISGSAGVLERMATTGVDIISLDWTVDMGEALARLPEHIGVQGNVDPGLLFGTPDAIEARIDDCVRKARGRKHILNLGHGILPGTPEENGAAFFRSGKSVIDRIGAFA</sequence>
<evidence type="ECO:0000255" key="1">
    <source>
        <dbReference type="HAMAP-Rule" id="MF_00218"/>
    </source>
</evidence>
<keyword id="KW-0963">Cytoplasm</keyword>
<keyword id="KW-0210">Decarboxylase</keyword>
<keyword id="KW-0456">Lyase</keyword>
<keyword id="KW-0627">Porphyrin biosynthesis</keyword>